<gene>
    <name type="primary">LENG9</name>
</gene>
<name>LENG9_HUMAN</name>
<keyword id="KW-0479">Metal-binding</keyword>
<keyword id="KW-1267">Proteomics identification</keyword>
<keyword id="KW-1185">Reference proteome</keyword>
<keyword id="KW-0862">Zinc</keyword>
<keyword id="KW-0863">Zinc-finger</keyword>
<organism>
    <name type="scientific">Homo sapiens</name>
    <name type="common">Human</name>
    <dbReference type="NCBI Taxonomy" id="9606"/>
    <lineage>
        <taxon>Eukaryota</taxon>
        <taxon>Metazoa</taxon>
        <taxon>Chordata</taxon>
        <taxon>Craniata</taxon>
        <taxon>Vertebrata</taxon>
        <taxon>Euteleostomi</taxon>
        <taxon>Mammalia</taxon>
        <taxon>Eutheria</taxon>
        <taxon>Euarchontoglires</taxon>
        <taxon>Primates</taxon>
        <taxon>Haplorrhini</taxon>
        <taxon>Catarrhini</taxon>
        <taxon>Hominidae</taxon>
        <taxon>Homo</taxon>
    </lineage>
</organism>
<protein>
    <recommendedName>
        <fullName>Leukocyte receptor cluster member 9</fullName>
    </recommendedName>
</protein>
<sequence length="501" mass="53167">MGSRPPCGATSSARRACQFPAPMAAAREPELPQEAPATEPAPPPACRFFLEGRCRFGARCRQPHPGAPAPPGREAQPEAGAKKPPLRTAADVIQRIRWDPRLDPADFSVGYVDRFLGVREEPFSAFCWDQPLAALGPGVLAVPQHRVRFFRFHGRLVWDRASRTDLVFGSGSAAGRGPTILDAPNTEGAHGAEGAEWTLAGTGQEAQAAPKRGSTRPLCTGHQEPGVEEPGELEAAQERALGTAADLGTLAPRGRLAGVTEEALKPTAATRTTLLGGKEAQALGVPGGSAETTEAEWGPAAWPEDKRARLSVAAPCQPRPTHFVALMVTEPGLQAEVTKAQEYLVHVAPHCANFLVPSQNLHLTLALLRLAGAGEEAAAIGALRRALLAPGLNAPPRLSFRKLVLLGPHVLCAPPSPTLESMAQVLSQRLEAEGLSTLQSPGQLHPHLTVAKVPHGSQVHLPKLEFTLSQEVGCQPLQTLWLCRIGRTGGPFQPLAEIRLE</sequence>
<dbReference type="EMBL" id="AC008746">
    <property type="status" value="NOT_ANNOTATED_CDS"/>
    <property type="molecule type" value="Genomic_DNA"/>
</dbReference>
<dbReference type="EMBL" id="CU207370">
    <property type="status" value="NOT_ANNOTATED_CDS"/>
    <property type="molecule type" value="Genomic_DNA"/>
</dbReference>
<dbReference type="EMBL" id="CH471135">
    <property type="protein sequence ID" value="EAW72251.1"/>
    <property type="molecule type" value="Genomic_DNA"/>
</dbReference>
<dbReference type="EMBL" id="BC015921">
    <property type="protein sequence ID" value="AAH15921.1"/>
    <property type="status" value="ALT_INIT"/>
    <property type="molecule type" value="mRNA"/>
</dbReference>
<dbReference type="RefSeq" id="NP_945339.2">
    <property type="nucleotide sequence ID" value="NM_198988.1"/>
</dbReference>
<dbReference type="RefSeq" id="XP_045037336.1">
    <property type="nucleotide sequence ID" value="XM_045181401.2"/>
</dbReference>
<dbReference type="RefSeq" id="XP_045037337.1">
    <property type="nucleotide sequence ID" value="XM_045181402.2"/>
</dbReference>
<dbReference type="SMR" id="Q96B70"/>
<dbReference type="BioGRID" id="125106">
    <property type="interactions" value="9"/>
</dbReference>
<dbReference type="FunCoup" id="Q96B70">
    <property type="interactions" value="42"/>
</dbReference>
<dbReference type="IntAct" id="Q96B70">
    <property type="interactions" value="3"/>
</dbReference>
<dbReference type="MINT" id="Q96B70"/>
<dbReference type="STRING" id="9606.ENSP00000479355"/>
<dbReference type="GlyGen" id="Q96B70">
    <property type="glycosylation" value="1 site, 1 O-linked glycan (1 site)"/>
</dbReference>
<dbReference type="iPTMnet" id="Q96B70"/>
<dbReference type="PhosphoSitePlus" id="Q96B70"/>
<dbReference type="BioMuta" id="LENG9"/>
<dbReference type="DMDM" id="296434565"/>
<dbReference type="jPOST" id="Q96B70"/>
<dbReference type="MassIVE" id="Q96B70"/>
<dbReference type="PaxDb" id="9606-ENSP00000479355"/>
<dbReference type="ProteomicsDB" id="76052"/>
<dbReference type="Pumba" id="Q96B70"/>
<dbReference type="DNASU" id="94059"/>
<dbReference type="Ensembl" id="ENST00000614111.1">
    <property type="protein sequence ID" value="ENSP00000483600.1"/>
    <property type="gene ID" value="ENSG00000274495.1"/>
</dbReference>
<dbReference type="Ensembl" id="ENST00000622419.1">
    <property type="protein sequence ID" value="ENSP00000477636.1"/>
    <property type="gene ID" value="ENSG00000273574.1"/>
</dbReference>
<dbReference type="GeneID" id="94059"/>
<dbReference type="UCSC" id="uc032jrx.2">
    <property type="organism name" value="human"/>
</dbReference>
<dbReference type="AGR" id="HGNC:16306"/>
<dbReference type="DisGeNET" id="94059"/>
<dbReference type="GeneCards" id="LENG9"/>
<dbReference type="HGNC" id="HGNC:16306">
    <property type="gene designation" value="LENG9"/>
</dbReference>
<dbReference type="neXtProt" id="NX_Q96B70"/>
<dbReference type="PharmGKB" id="PA134975056"/>
<dbReference type="eggNOG" id="ENOG502QQIY">
    <property type="taxonomic scope" value="Eukaryota"/>
</dbReference>
<dbReference type="InParanoid" id="Q96B70"/>
<dbReference type="OrthoDB" id="10263155at2759"/>
<dbReference type="PAN-GO" id="Q96B70">
    <property type="GO annotations" value="0 GO annotations based on evolutionary models"/>
</dbReference>
<dbReference type="PhylomeDB" id="Q96B70"/>
<dbReference type="TreeFam" id="TF329287"/>
<dbReference type="PathwayCommons" id="Q96B70"/>
<dbReference type="SignaLink" id="Q96B70"/>
<dbReference type="BioGRID-ORCS" id="94059">
    <property type="hits" value="14 hits in 1138 CRISPR screens"/>
</dbReference>
<dbReference type="ChiTaRS" id="LENG9">
    <property type="organism name" value="human"/>
</dbReference>
<dbReference type="GenomeRNAi" id="94059"/>
<dbReference type="Pharos" id="Q96B70">
    <property type="development level" value="Tdark"/>
</dbReference>
<dbReference type="PRO" id="PR:Q96B70"/>
<dbReference type="Proteomes" id="UP000005640">
    <property type="component" value="Unplaced"/>
</dbReference>
<dbReference type="RNAct" id="Q96B70">
    <property type="molecule type" value="protein"/>
</dbReference>
<dbReference type="GO" id="GO:0008270">
    <property type="term" value="F:zinc ion binding"/>
    <property type="evidence" value="ECO:0007669"/>
    <property type="project" value="UniProtKB-KW"/>
</dbReference>
<dbReference type="Gene3D" id="3.90.1140.10">
    <property type="entry name" value="Cyclic phosphodiesterase"/>
    <property type="match status" value="1"/>
</dbReference>
<dbReference type="InterPro" id="IPR019510">
    <property type="entry name" value="AKAP7-like_phosphoesterase"/>
</dbReference>
<dbReference type="InterPro" id="IPR009097">
    <property type="entry name" value="Cyclic_Pdiesterase"/>
</dbReference>
<dbReference type="InterPro" id="IPR042653">
    <property type="entry name" value="Leng9"/>
</dbReference>
<dbReference type="InterPro" id="IPR040459">
    <property type="entry name" value="MJ1316"/>
</dbReference>
<dbReference type="InterPro" id="IPR000571">
    <property type="entry name" value="Znf_CCCH"/>
</dbReference>
<dbReference type="PANTHER" id="PTHR46729">
    <property type="entry name" value="LEUKOCYTE RECEPTOR CLUSTER MEMBER 9"/>
    <property type="match status" value="1"/>
</dbReference>
<dbReference type="PANTHER" id="PTHR46729:SF1">
    <property type="entry name" value="LEUKOCYTE RECEPTOR CLUSTER MEMBER 9"/>
    <property type="match status" value="1"/>
</dbReference>
<dbReference type="Pfam" id="PF10469">
    <property type="entry name" value="AKAP7_NLS"/>
    <property type="match status" value="1"/>
</dbReference>
<dbReference type="Pfam" id="PF04457">
    <property type="entry name" value="MJ1316"/>
    <property type="match status" value="1"/>
</dbReference>
<dbReference type="Pfam" id="PF00642">
    <property type="entry name" value="zf-CCCH"/>
    <property type="match status" value="1"/>
</dbReference>
<dbReference type="SMART" id="SM00356">
    <property type="entry name" value="ZnF_C3H1"/>
    <property type="match status" value="1"/>
</dbReference>
<dbReference type="SUPFAM" id="SSF55144">
    <property type="entry name" value="LigT-like"/>
    <property type="match status" value="1"/>
</dbReference>
<dbReference type="PROSITE" id="PS50103">
    <property type="entry name" value="ZF_C3H1"/>
    <property type="match status" value="1"/>
</dbReference>
<proteinExistence type="evidence at protein level"/>
<feature type="chain" id="PRO_0000263688" description="Leukocyte receptor cluster member 9">
    <location>
        <begin position="1"/>
        <end position="501"/>
    </location>
</feature>
<feature type="zinc finger region" description="C3H1-type" evidence="1">
    <location>
        <begin position="40"/>
        <end position="67"/>
    </location>
</feature>
<feature type="region of interest" description="Disordered" evidence="2">
    <location>
        <begin position="1"/>
        <end position="43"/>
    </location>
</feature>
<feature type="region of interest" description="Disordered" evidence="2">
    <location>
        <begin position="61"/>
        <end position="86"/>
    </location>
</feature>
<feature type="region of interest" description="Disordered" evidence="2">
    <location>
        <begin position="203"/>
        <end position="234"/>
    </location>
</feature>
<feature type="region of interest" description="Disordered" evidence="2">
    <location>
        <begin position="281"/>
        <end position="300"/>
    </location>
</feature>
<feature type="sequence variant" id="VAR_029602" description="In dbSNP:rs10406453.">
    <original>H</original>
    <variation>R</variation>
    <location>
        <position position="153"/>
    </location>
</feature>
<feature type="sequence variant" id="VAR_029603" description="In dbSNP:rs10423424.">
    <original>R</original>
    <variation>P</variation>
    <location>
        <position position="499"/>
    </location>
</feature>
<reference key="1">
    <citation type="journal article" date="2004" name="Nature">
        <title>The DNA sequence and biology of human chromosome 19.</title>
        <authorList>
            <person name="Grimwood J."/>
            <person name="Gordon L.A."/>
            <person name="Olsen A.S."/>
            <person name="Terry A."/>
            <person name="Schmutz J."/>
            <person name="Lamerdin J.E."/>
            <person name="Hellsten U."/>
            <person name="Goodstein D."/>
            <person name="Couronne O."/>
            <person name="Tran-Gyamfi M."/>
            <person name="Aerts A."/>
            <person name="Altherr M."/>
            <person name="Ashworth L."/>
            <person name="Bajorek E."/>
            <person name="Black S."/>
            <person name="Branscomb E."/>
            <person name="Caenepeel S."/>
            <person name="Carrano A.V."/>
            <person name="Caoile C."/>
            <person name="Chan Y.M."/>
            <person name="Christensen M."/>
            <person name="Cleland C.A."/>
            <person name="Copeland A."/>
            <person name="Dalin E."/>
            <person name="Dehal P."/>
            <person name="Denys M."/>
            <person name="Detter J.C."/>
            <person name="Escobar J."/>
            <person name="Flowers D."/>
            <person name="Fotopulos D."/>
            <person name="Garcia C."/>
            <person name="Georgescu A.M."/>
            <person name="Glavina T."/>
            <person name="Gomez M."/>
            <person name="Gonzales E."/>
            <person name="Groza M."/>
            <person name="Hammon N."/>
            <person name="Hawkins T."/>
            <person name="Haydu L."/>
            <person name="Ho I."/>
            <person name="Huang W."/>
            <person name="Israni S."/>
            <person name="Jett J."/>
            <person name="Kadner K."/>
            <person name="Kimball H."/>
            <person name="Kobayashi A."/>
            <person name="Larionov V."/>
            <person name="Leem S.-H."/>
            <person name="Lopez F."/>
            <person name="Lou Y."/>
            <person name="Lowry S."/>
            <person name="Malfatti S."/>
            <person name="Martinez D."/>
            <person name="McCready P.M."/>
            <person name="Medina C."/>
            <person name="Morgan J."/>
            <person name="Nelson K."/>
            <person name="Nolan M."/>
            <person name="Ovcharenko I."/>
            <person name="Pitluck S."/>
            <person name="Pollard M."/>
            <person name="Popkie A.P."/>
            <person name="Predki P."/>
            <person name="Quan G."/>
            <person name="Ramirez L."/>
            <person name="Rash S."/>
            <person name="Retterer J."/>
            <person name="Rodriguez A."/>
            <person name="Rogers S."/>
            <person name="Salamov A."/>
            <person name="Salazar A."/>
            <person name="She X."/>
            <person name="Smith D."/>
            <person name="Slezak T."/>
            <person name="Solovyev V."/>
            <person name="Thayer N."/>
            <person name="Tice H."/>
            <person name="Tsai M."/>
            <person name="Ustaszewska A."/>
            <person name="Vo N."/>
            <person name="Wagner M."/>
            <person name="Wheeler J."/>
            <person name="Wu K."/>
            <person name="Xie G."/>
            <person name="Yang J."/>
            <person name="Dubchak I."/>
            <person name="Furey T.S."/>
            <person name="DeJong P."/>
            <person name="Dickson M."/>
            <person name="Gordon D."/>
            <person name="Eichler E.E."/>
            <person name="Pennacchio L.A."/>
            <person name="Richardson P."/>
            <person name="Stubbs L."/>
            <person name="Rokhsar D.S."/>
            <person name="Myers R.M."/>
            <person name="Rubin E.M."/>
            <person name="Lucas S.M."/>
        </authorList>
    </citation>
    <scope>NUCLEOTIDE SEQUENCE [LARGE SCALE GENOMIC DNA]</scope>
</reference>
<reference key="2">
    <citation type="submission" date="2005-07" db="EMBL/GenBank/DDBJ databases">
        <authorList>
            <person name="Mural R.J."/>
            <person name="Istrail S."/>
            <person name="Sutton G.G."/>
            <person name="Florea L."/>
            <person name="Halpern A.L."/>
            <person name="Mobarry C.M."/>
            <person name="Lippert R."/>
            <person name="Walenz B."/>
            <person name="Shatkay H."/>
            <person name="Dew I."/>
            <person name="Miller J.R."/>
            <person name="Flanigan M.J."/>
            <person name="Edwards N.J."/>
            <person name="Bolanos R."/>
            <person name="Fasulo D."/>
            <person name="Halldorsson B.V."/>
            <person name="Hannenhalli S."/>
            <person name="Turner R."/>
            <person name="Yooseph S."/>
            <person name="Lu F."/>
            <person name="Nusskern D.R."/>
            <person name="Shue B.C."/>
            <person name="Zheng X.H."/>
            <person name="Zhong F."/>
            <person name="Delcher A.L."/>
            <person name="Huson D.H."/>
            <person name="Kravitz S.A."/>
            <person name="Mouchard L."/>
            <person name="Reinert K."/>
            <person name="Remington K.A."/>
            <person name="Clark A.G."/>
            <person name="Waterman M.S."/>
            <person name="Eichler E.E."/>
            <person name="Adams M.D."/>
            <person name="Hunkapiller M.W."/>
            <person name="Myers E.W."/>
            <person name="Venter J.C."/>
        </authorList>
    </citation>
    <scope>NUCLEOTIDE SEQUENCE [LARGE SCALE GENOMIC DNA]</scope>
</reference>
<reference key="3">
    <citation type="journal article" date="2004" name="Genome Res.">
        <title>The status, quality, and expansion of the NIH full-length cDNA project: the Mammalian Gene Collection (MGC).</title>
        <authorList>
            <consortium name="The MGC Project Team"/>
        </authorList>
    </citation>
    <scope>NUCLEOTIDE SEQUENCE [LARGE SCALE MRNA]</scope>
    <source>
        <tissue>Lung</tissue>
    </source>
</reference>
<accession>Q96B70</accession>
<accession>B2VAM3</accession>
<evidence type="ECO:0000255" key="1">
    <source>
        <dbReference type="PROSITE-ProRule" id="PRU00723"/>
    </source>
</evidence>
<evidence type="ECO:0000256" key="2">
    <source>
        <dbReference type="SAM" id="MobiDB-lite"/>
    </source>
</evidence>
<evidence type="ECO:0000305" key="3"/>
<comment type="caution">
    <text evidence="3">It is uncertain whether Met-1 or Met-23 is the initiator.</text>
</comment>
<comment type="sequence caution" evidence="3">
    <conflict type="erroneous initiation">
        <sequence resource="EMBL-CDS" id="AAH15921"/>
    </conflict>
    <text>Truncated N-terminus.</text>
</comment>